<comment type="function">
    <text evidence="1">Together with the chaperonin GroEL, plays an essential role in assisting protein folding. The GroEL-GroES system forms a nano-cage that allows encapsulation of the non-native substrate proteins and provides a physical environment optimized to promote and accelerate protein folding. GroES binds to the apical surface of the GroEL ring, thereby capping the opening of the GroEL channel.</text>
</comment>
<comment type="subunit">
    <text evidence="1">Heptamer of 7 subunits arranged in a ring. Interacts with the chaperonin GroEL.</text>
</comment>
<comment type="subcellular location">
    <subcellularLocation>
        <location evidence="1">Cytoplasm</location>
    </subcellularLocation>
</comment>
<comment type="similarity">
    <text evidence="1 2">Belongs to the GroES chaperonin family.</text>
</comment>
<name>CH10_STAAM</name>
<feature type="chain" id="PRO_0000174840" description="Co-chaperonin GroES">
    <location>
        <begin position="1"/>
        <end position="94"/>
    </location>
</feature>
<protein>
    <recommendedName>
        <fullName evidence="1">Co-chaperonin GroES</fullName>
    </recommendedName>
    <alternativeName>
        <fullName evidence="1">10 kDa chaperonin</fullName>
    </alternativeName>
    <alternativeName>
        <fullName evidence="1">Chaperonin-10</fullName>
        <shortName evidence="1">Cpn10</shortName>
    </alternativeName>
    <alternativeName>
        <fullName>Heat shock protein 10</fullName>
    </alternativeName>
</protein>
<reference key="1">
    <citation type="journal article" date="2001" name="Lancet">
        <title>Whole genome sequencing of meticillin-resistant Staphylococcus aureus.</title>
        <authorList>
            <person name="Kuroda M."/>
            <person name="Ohta T."/>
            <person name="Uchiyama I."/>
            <person name="Baba T."/>
            <person name="Yuzawa H."/>
            <person name="Kobayashi I."/>
            <person name="Cui L."/>
            <person name="Oguchi A."/>
            <person name="Aoki K."/>
            <person name="Nagai Y."/>
            <person name="Lian J.-Q."/>
            <person name="Ito T."/>
            <person name="Kanamori M."/>
            <person name="Matsumaru H."/>
            <person name="Maruyama A."/>
            <person name="Murakami H."/>
            <person name="Hosoyama A."/>
            <person name="Mizutani-Ui Y."/>
            <person name="Takahashi N.K."/>
            <person name="Sawano T."/>
            <person name="Inoue R."/>
            <person name="Kaito C."/>
            <person name="Sekimizu K."/>
            <person name="Hirakawa H."/>
            <person name="Kuhara S."/>
            <person name="Goto S."/>
            <person name="Yabuzaki J."/>
            <person name="Kanehisa M."/>
            <person name="Yamashita A."/>
            <person name="Oshima K."/>
            <person name="Furuya K."/>
            <person name="Yoshino C."/>
            <person name="Shiba T."/>
            <person name="Hattori M."/>
            <person name="Ogasawara N."/>
            <person name="Hayashi H."/>
            <person name="Hiramatsu K."/>
        </authorList>
    </citation>
    <scope>NUCLEOTIDE SEQUENCE [LARGE SCALE GENOMIC DNA]</scope>
    <source>
        <strain>Mu50 / ATCC 700699</strain>
    </source>
</reference>
<gene>
    <name evidence="1" type="primary">groES</name>
    <name evidence="1" type="synonym">groS</name>
    <name type="synonym">hsp10</name>
    <name type="ordered locus">SAV2030</name>
</gene>
<accession>P0A012</accession>
<accession>Q08841</accession>
<organism>
    <name type="scientific">Staphylococcus aureus (strain Mu50 / ATCC 700699)</name>
    <dbReference type="NCBI Taxonomy" id="158878"/>
    <lineage>
        <taxon>Bacteria</taxon>
        <taxon>Bacillati</taxon>
        <taxon>Bacillota</taxon>
        <taxon>Bacilli</taxon>
        <taxon>Bacillales</taxon>
        <taxon>Staphylococcaceae</taxon>
        <taxon>Staphylococcus</taxon>
    </lineage>
</organism>
<keyword id="KW-0143">Chaperone</keyword>
<keyword id="KW-0963">Cytoplasm</keyword>
<keyword id="KW-0346">Stress response</keyword>
<sequence>MLKPIGNRVIIEKKEQEQTTKSGIVLTDSAKEKSNEGVIVAVGTGRLLNDGTRVTPEVKEGDRVVFQQYAGTEVKRDNETYLVLNEEDILAVIE</sequence>
<dbReference type="EMBL" id="BA000017">
    <property type="protein sequence ID" value="BAB58192.1"/>
    <property type="molecule type" value="Genomic_DNA"/>
</dbReference>
<dbReference type="RefSeq" id="WP_000917289.1">
    <property type="nucleotide sequence ID" value="NC_002758.2"/>
</dbReference>
<dbReference type="SMR" id="P0A012"/>
<dbReference type="GeneID" id="98346332"/>
<dbReference type="KEGG" id="sav:SAV2030"/>
<dbReference type="HOGENOM" id="CLU_132825_2_1_9"/>
<dbReference type="PhylomeDB" id="P0A012"/>
<dbReference type="Proteomes" id="UP000002481">
    <property type="component" value="Chromosome"/>
</dbReference>
<dbReference type="GO" id="GO:0005737">
    <property type="term" value="C:cytoplasm"/>
    <property type="evidence" value="ECO:0007669"/>
    <property type="project" value="UniProtKB-SubCell"/>
</dbReference>
<dbReference type="GO" id="GO:0005524">
    <property type="term" value="F:ATP binding"/>
    <property type="evidence" value="ECO:0007669"/>
    <property type="project" value="InterPro"/>
</dbReference>
<dbReference type="GO" id="GO:0046872">
    <property type="term" value="F:metal ion binding"/>
    <property type="evidence" value="ECO:0007669"/>
    <property type="project" value="TreeGrafter"/>
</dbReference>
<dbReference type="GO" id="GO:0044183">
    <property type="term" value="F:protein folding chaperone"/>
    <property type="evidence" value="ECO:0007669"/>
    <property type="project" value="InterPro"/>
</dbReference>
<dbReference type="GO" id="GO:0051087">
    <property type="term" value="F:protein-folding chaperone binding"/>
    <property type="evidence" value="ECO:0007669"/>
    <property type="project" value="TreeGrafter"/>
</dbReference>
<dbReference type="GO" id="GO:0051082">
    <property type="term" value="F:unfolded protein binding"/>
    <property type="evidence" value="ECO:0007669"/>
    <property type="project" value="TreeGrafter"/>
</dbReference>
<dbReference type="GO" id="GO:0051085">
    <property type="term" value="P:chaperone cofactor-dependent protein refolding"/>
    <property type="evidence" value="ECO:0007669"/>
    <property type="project" value="TreeGrafter"/>
</dbReference>
<dbReference type="CDD" id="cd00320">
    <property type="entry name" value="cpn10"/>
    <property type="match status" value="1"/>
</dbReference>
<dbReference type="FunFam" id="2.30.33.40:FF:000001">
    <property type="entry name" value="10 kDa chaperonin"/>
    <property type="match status" value="1"/>
</dbReference>
<dbReference type="Gene3D" id="2.30.33.40">
    <property type="entry name" value="GroES chaperonin"/>
    <property type="match status" value="1"/>
</dbReference>
<dbReference type="HAMAP" id="MF_00580">
    <property type="entry name" value="CH10"/>
    <property type="match status" value="1"/>
</dbReference>
<dbReference type="InterPro" id="IPR020818">
    <property type="entry name" value="Chaperonin_GroES"/>
</dbReference>
<dbReference type="InterPro" id="IPR037124">
    <property type="entry name" value="Chaperonin_GroES_sf"/>
</dbReference>
<dbReference type="InterPro" id="IPR018369">
    <property type="entry name" value="Chaprnonin_Cpn10_CS"/>
</dbReference>
<dbReference type="InterPro" id="IPR011032">
    <property type="entry name" value="GroES-like_sf"/>
</dbReference>
<dbReference type="NCBIfam" id="NF001531">
    <property type="entry name" value="PRK00364.2-2"/>
    <property type="match status" value="1"/>
</dbReference>
<dbReference type="NCBIfam" id="NF001532">
    <property type="entry name" value="PRK00364.2-3"/>
    <property type="match status" value="1"/>
</dbReference>
<dbReference type="NCBIfam" id="NF001533">
    <property type="entry name" value="PRK00364.2-4"/>
    <property type="match status" value="1"/>
</dbReference>
<dbReference type="NCBIfam" id="NF001534">
    <property type="entry name" value="PRK00364.2-5"/>
    <property type="match status" value="1"/>
</dbReference>
<dbReference type="PANTHER" id="PTHR10772">
    <property type="entry name" value="10 KDA HEAT SHOCK PROTEIN"/>
    <property type="match status" value="1"/>
</dbReference>
<dbReference type="PANTHER" id="PTHR10772:SF58">
    <property type="entry name" value="CO-CHAPERONIN GROES"/>
    <property type="match status" value="1"/>
</dbReference>
<dbReference type="Pfam" id="PF00166">
    <property type="entry name" value="Cpn10"/>
    <property type="match status" value="1"/>
</dbReference>
<dbReference type="PRINTS" id="PR00297">
    <property type="entry name" value="CHAPERONIN10"/>
</dbReference>
<dbReference type="SMART" id="SM00883">
    <property type="entry name" value="Cpn10"/>
    <property type="match status" value="1"/>
</dbReference>
<dbReference type="SUPFAM" id="SSF50129">
    <property type="entry name" value="GroES-like"/>
    <property type="match status" value="1"/>
</dbReference>
<dbReference type="PROSITE" id="PS00681">
    <property type="entry name" value="CHAPERONINS_CPN10"/>
    <property type="match status" value="1"/>
</dbReference>
<proteinExistence type="inferred from homology"/>
<evidence type="ECO:0000255" key="1">
    <source>
        <dbReference type="HAMAP-Rule" id="MF_00580"/>
    </source>
</evidence>
<evidence type="ECO:0000305" key="2"/>